<reference key="1">
    <citation type="journal article" date="2004" name="Science">
        <title>The 1.2-megabase genome sequence of Mimivirus.</title>
        <authorList>
            <person name="Raoult D."/>
            <person name="Audic S."/>
            <person name="Robert C."/>
            <person name="Abergel C."/>
            <person name="Renesto P."/>
            <person name="Ogata H."/>
            <person name="La Scola B."/>
            <person name="Susan M."/>
            <person name="Claverie J.-M."/>
        </authorList>
    </citation>
    <scope>NUCLEOTIDE SEQUENCE [LARGE SCALE GENOMIC DNA]</scope>
    <source>
        <strain>Rowbotham-Bradford</strain>
    </source>
</reference>
<organism>
    <name type="scientific">Acanthamoeba polyphaga mimivirus</name>
    <name type="common">APMV</name>
    <dbReference type="NCBI Taxonomy" id="212035"/>
    <lineage>
        <taxon>Viruses</taxon>
        <taxon>Varidnaviria</taxon>
        <taxon>Bamfordvirae</taxon>
        <taxon>Nucleocytoviricota</taxon>
        <taxon>Megaviricetes</taxon>
        <taxon>Imitervirales</taxon>
        <taxon>Mimiviridae</taxon>
        <taxon>Megamimivirinae</taxon>
        <taxon>Mimivirus</taxon>
        <taxon>Mimivirus bradfordmassiliense</taxon>
    </lineage>
</organism>
<feature type="chain" id="PRO_0000187229" description="Ribonucleoside-diphosphate reductase large subunit">
    <location>
        <begin position="1"/>
        <end position="881"/>
    </location>
</feature>
<feature type="domain" description="ATP-cone" evidence="2">
    <location>
        <begin position="69"/>
        <end position="160"/>
    </location>
</feature>
<feature type="active site" description="Proton acceptor" evidence="1">
    <location>
        <position position="493"/>
    </location>
</feature>
<feature type="active site" description="Cysteine radical intermediate" evidence="1">
    <location>
        <position position="495"/>
    </location>
</feature>
<feature type="active site" description="Proton acceptor" evidence="1">
    <location>
        <position position="497"/>
    </location>
</feature>
<feature type="binding site" evidence="1">
    <location>
        <position position="271"/>
    </location>
    <ligand>
        <name>substrate</name>
    </ligand>
</feature>
<feature type="binding site" evidence="1">
    <location>
        <begin position="286"/>
        <end position="287"/>
    </location>
    <ligand>
        <name>substrate</name>
    </ligand>
</feature>
<feature type="binding site" evidence="1">
    <location>
        <position position="315"/>
    </location>
    <ligand>
        <name>substrate</name>
    </ligand>
</feature>
<feature type="binding site" evidence="1">
    <location>
        <begin position="493"/>
        <end position="497"/>
    </location>
    <ligand>
        <name>substrate</name>
    </ligand>
</feature>
<feature type="binding site" evidence="1">
    <location>
        <begin position="675"/>
        <end position="679"/>
    </location>
    <ligand>
        <name>substrate</name>
    </ligand>
</feature>
<feature type="site" description="Important for hydrogen atom transfer" evidence="1">
    <location>
        <position position="287"/>
    </location>
</feature>
<feature type="site" description="Allosteric effector binding" evidence="1">
    <location>
        <position position="294"/>
    </location>
</feature>
<feature type="site" description="Allosteric effector binding" evidence="1">
    <location>
        <position position="324"/>
    </location>
</feature>
<feature type="site" description="Important for hydrogen atom transfer" evidence="1">
    <location>
        <position position="510"/>
    </location>
</feature>
<feature type="site" description="Important for electron transfer" evidence="1">
    <location>
        <position position="809"/>
    </location>
</feature>
<feature type="site" description="Important for electron transfer" evidence="1">
    <location>
        <position position="810"/>
    </location>
</feature>
<feature type="site" description="Interacts with thioredoxin/glutaredoxin" evidence="1">
    <location>
        <position position="876"/>
    </location>
</feature>
<feature type="site" description="Interacts with thioredoxin/glutaredoxin" evidence="1">
    <location>
        <position position="879"/>
    </location>
</feature>
<feature type="disulfide bond" description="Redox-active" evidence="1">
    <location>
        <begin position="287"/>
        <end position="510"/>
    </location>
</feature>
<comment type="function">
    <text evidence="1">Ribonucleoside-diphosphate reductase holoenzyme provides the precursors necessary for viral DNA synthesis. Allows virus growth in non-dividing cells. Catalyzes the biosynthesis of deoxyribonucleotides from the corresponding ribonucleotides (By similarity).</text>
</comment>
<comment type="catalytic activity">
    <reaction>
        <text>a 2'-deoxyribonucleoside 5'-diphosphate + [thioredoxin]-disulfide + H2O = a ribonucleoside 5'-diphosphate + [thioredoxin]-dithiol</text>
        <dbReference type="Rhea" id="RHEA:23252"/>
        <dbReference type="Rhea" id="RHEA-COMP:10698"/>
        <dbReference type="Rhea" id="RHEA-COMP:10700"/>
        <dbReference type="ChEBI" id="CHEBI:15377"/>
        <dbReference type="ChEBI" id="CHEBI:29950"/>
        <dbReference type="ChEBI" id="CHEBI:50058"/>
        <dbReference type="ChEBI" id="CHEBI:57930"/>
        <dbReference type="ChEBI" id="CHEBI:73316"/>
        <dbReference type="EC" id="1.17.4.1"/>
    </reaction>
</comment>
<comment type="activity regulation">
    <text evidence="1">Under complex allosteric control mediated by deoxynucleoside triphosphates and ATP binding. The type of nucleotide bound at the specificity site determines substrate preference. It seems probable that ATP makes the enzyme reduce CDP and UDP, dGTP favors ADP reduction and dTTP favors GDP reduction (By similarity).</text>
</comment>
<comment type="subunit">
    <text evidence="1">Heterotetramer composed of a homodimer of the large subunit (R1) and a homodimer of the small subunit (R2). Larger multisubunit protein complex are also active, composed of (R1)n(R2)n (By similarity).</text>
</comment>
<comment type="similarity">
    <text evidence="3">Belongs to the ribonucleoside diphosphate reductase large chain family.</text>
</comment>
<proteinExistence type="inferred from homology"/>
<sequence>MNSKNSIILDNLADVSDIIDYEQNSIDYQRSIKNIEQLKSTEATEITNKLAINKAKKSSNILLEVPKETIYLDHNGSIQVITSEIIRTYVEKIFEKMEVTHLDIDKMTKNIFPKLKSINTIKDIDNQIISTASEMVTDHYDYPKIAVWILMTNLHDNTSDDFLETAEKLYNNKSESNKNAPIISENIYNFIKKHIKEINRVIRYDRDYNLTIFGFRTLEKSYLKRINKKIVERPQHLFMRVAITLHYRKNDLDRIFETYKYLSKGYFTHATPTLFNAGTTHEQLSSCFLLGIGDSLEEISECWKECALISKHAGGIGIHMTNIRVEGAYIASTQGEAGGLRVLTIFNDISRYANQGGKRPGSFAIFIEPWHGDIFFFLDLKKNTGAETERARDLFLGLMINDIFMERVYKDDVWSLMCPSQCPNLLNKYGDEFTKEYLKYESEGIYLKQIRAIDLWFKIMESQIETGVPYVMFKDAINDKSNQINIGVVNGSNLCCEIVEVSDKNNFSVCNLSSICLPRFVKIIDEVPTFNYQKLFKISRILTRNLNNIIDINFYPLDKTRITNLRDRPIGIGVQGLADVFAMFKTPFDSEIARDLNRKIFETIYYGALTESNKLAREFGTYQTYQGSPISQGKFQFDLWNFDKSQLSGMWDWELLRQEILNHGVRNSLVTTCMPTASTSQIMGWNECIEPYTENIYSRSTMAGEYFVINKHLIKDLIELGVWNSEMVDLIKYYKGSVANIPNIPDNIKAIYRTVWEIPQKSIIEMAADRAPFVDQTQSMNLYIDKPSFARLNSCLFYAWRKGLKTGMYYLRSKPASSANQFGIDIDKIKEIESKNGIKKQEDTFDLTDLTNTINQQVSGMVCRFVPAHLRKPGECLSCDG</sequence>
<accession>Q7T6Y8</accession>
<dbReference type="EC" id="1.17.4.1"/>
<dbReference type="EMBL" id="AY653733">
    <property type="protein sequence ID" value="AAQ09572.2"/>
    <property type="molecule type" value="Genomic_DNA"/>
</dbReference>
<dbReference type="SMR" id="Q7T6Y8"/>
<dbReference type="KEGG" id="vg:9924930"/>
<dbReference type="OrthoDB" id="2980at10239"/>
<dbReference type="Proteomes" id="UP000001134">
    <property type="component" value="Genome"/>
</dbReference>
<dbReference type="GO" id="GO:0005524">
    <property type="term" value="F:ATP binding"/>
    <property type="evidence" value="ECO:0007669"/>
    <property type="project" value="UniProtKB-KW"/>
</dbReference>
<dbReference type="GO" id="GO:0004748">
    <property type="term" value="F:ribonucleoside-diphosphate reductase activity, thioredoxin disulfide as acceptor"/>
    <property type="evidence" value="ECO:0007669"/>
    <property type="project" value="UniProtKB-EC"/>
</dbReference>
<dbReference type="GO" id="GO:0009263">
    <property type="term" value="P:deoxyribonucleotide biosynthetic process"/>
    <property type="evidence" value="ECO:0007669"/>
    <property type="project" value="UniProtKB-KW"/>
</dbReference>
<dbReference type="CDD" id="cd01679">
    <property type="entry name" value="RNR_I"/>
    <property type="match status" value="1"/>
</dbReference>
<dbReference type="Gene3D" id="3.20.70.20">
    <property type="match status" value="1"/>
</dbReference>
<dbReference type="InterPro" id="IPR005144">
    <property type="entry name" value="ATP-cone_dom"/>
</dbReference>
<dbReference type="InterPro" id="IPR013346">
    <property type="entry name" value="NrdE_NrdA_C"/>
</dbReference>
<dbReference type="InterPro" id="IPR000788">
    <property type="entry name" value="RNR_lg_C"/>
</dbReference>
<dbReference type="InterPro" id="IPR013509">
    <property type="entry name" value="RNR_lsu_N"/>
</dbReference>
<dbReference type="InterPro" id="IPR008926">
    <property type="entry name" value="RNR_R1-su_N"/>
</dbReference>
<dbReference type="InterPro" id="IPR039718">
    <property type="entry name" value="Rrm1"/>
</dbReference>
<dbReference type="NCBIfam" id="TIGR02506">
    <property type="entry name" value="NrdE_NrdA"/>
    <property type="match status" value="1"/>
</dbReference>
<dbReference type="PANTHER" id="PTHR11573">
    <property type="entry name" value="RIBONUCLEOSIDE-DIPHOSPHATE REDUCTASE LARGE CHAIN"/>
    <property type="match status" value="1"/>
</dbReference>
<dbReference type="PANTHER" id="PTHR11573:SF6">
    <property type="entry name" value="RIBONUCLEOSIDE-DIPHOSPHATE REDUCTASE LARGE SUBUNIT"/>
    <property type="match status" value="1"/>
</dbReference>
<dbReference type="Pfam" id="PF02867">
    <property type="entry name" value="Ribonuc_red_lgC"/>
    <property type="match status" value="1"/>
</dbReference>
<dbReference type="Pfam" id="PF00317">
    <property type="entry name" value="Ribonuc_red_lgN"/>
    <property type="match status" value="1"/>
</dbReference>
<dbReference type="PRINTS" id="PR01183">
    <property type="entry name" value="RIBORDTASEM1"/>
</dbReference>
<dbReference type="SUPFAM" id="SSF51998">
    <property type="entry name" value="PFL-like glycyl radical enzymes"/>
    <property type="match status" value="1"/>
</dbReference>
<dbReference type="SUPFAM" id="SSF48168">
    <property type="entry name" value="R1 subunit of ribonucleotide reductase, N-terminal domain"/>
    <property type="match status" value="1"/>
</dbReference>
<dbReference type="PROSITE" id="PS51161">
    <property type="entry name" value="ATP_CONE"/>
    <property type="match status" value="1"/>
</dbReference>
<organismHost>
    <name type="scientific">Acanthamoeba polyphaga</name>
    <name type="common">Amoeba</name>
    <dbReference type="NCBI Taxonomy" id="5757"/>
</organismHost>
<protein>
    <recommendedName>
        <fullName>Ribonucleoside-diphosphate reductase large subunit</fullName>
        <ecNumber>1.17.4.1</ecNumber>
    </recommendedName>
    <alternativeName>
        <fullName>Ribonucleotide reductase large subunit</fullName>
    </alternativeName>
</protein>
<evidence type="ECO:0000250" key="1"/>
<evidence type="ECO:0000255" key="2">
    <source>
        <dbReference type="PROSITE-ProRule" id="PRU00492"/>
    </source>
</evidence>
<evidence type="ECO:0000305" key="3"/>
<name>RIR1_MIMIV</name>
<gene>
    <name type="primary">RNR1</name>
    <name type="ordered locus">MIMI_R313</name>
</gene>
<keyword id="KW-0021">Allosteric enzyme</keyword>
<keyword id="KW-0067">ATP-binding</keyword>
<keyword id="KW-0215">Deoxyribonucleotide synthesis</keyword>
<keyword id="KW-1015">Disulfide bond</keyword>
<keyword id="KW-0244">Early protein</keyword>
<keyword id="KW-0547">Nucleotide-binding</keyword>
<keyword id="KW-0560">Oxidoreductase</keyword>
<keyword id="KW-1185">Reference proteome</keyword>